<accession>A6URL2</accession>
<keyword id="KW-0963">Cytoplasm</keyword>
<keyword id="KW-0413">Isomerase</keyword>
<keyword id="KW-0627">Porphyrin biosynthesis</keyword>
<keyword id="KW-0663">Pyridoxal phosphate</keyword>
<dbReference type="EC" id="5.4.3.8" evidence="1"/>
<dbReference type="EMBL" id="CP000742">
    <property type="protein sequence ID" value="ABR55134.1"/>
    <property type="molecule type" value="Genomic_DNA"/>
</dbReference>
<dbReference type="RefSeq" id="WP_012066049.1">
    <property type="nucleotide sequence ID" value="NC_009634.1"/>
</dbReference>
<dbReference type="SMR" id="A6URL2"/>
<dbReference type="STRING" id="406327.Mevan_1237"/>
<dbReference type="GeneID" id="5324909"/>
<dbReference type="KEGG" id="mvn:Mevan_1237"/>
<dbReference type="eggNOG" id="arCOG00918">
    <property type="taxonomic scope" value="Archaea"/>
</dbReference>
<dbReference type="HOGENOM" id="CLU_016922_1_5_2"/>
<dbReference type="OrthoDB" id="6524at2157"/>
<dbReference type="UniPathway" id="UPA00251">
    <property type="reaction ID" value="UER00317"/>
</dbReference>
<dbReference type="Proteomes" id="UP000001107">
    <property type="component" value="Chromosome"/>
</dbReference>
<dbReference type="GO" id="GO:0005737">
    <property type="term" value="C:cytoplasm"/>
    <property type="evidence" value="ECO:0007669"/>
    <property type="project" value="UniProtKB-SubCell"/>
</dbReference>
<dbReference type="GO" id="GO:0042286">
    <property type="term" value="F:glutamate-1-semialdehyde 2,1-aminomutase activity"/>
    <property type="evidence" value="ECO:0007669"/>
    <property type="project" value="UniProtKB-UniRule"/>
</dbReference>
<dbReference type="GO" id="GO:0030170">
    <property type="term" value="F:pyridoxal phosphate binding"/>
    <property type="evidence" value="ECO:0007669"/>
    <property type="project" value="InterPro"/>
</dbReference>
<dbReference type="GO" id="GO:0008483">
    <property type="term" value="F:transaminase activity"/>
    <property type="evidence" value="ECO:0007669"/>
    <property type="project" value="InterPro"/>
</dbReference>
<dbReference type="GO" id="GO:0006782">
    <property type="term" value="P:protoporphyrinogen IX biosynthetic process"/>
    <property type="evidence" value="ECO:0007669"/>
    <property type="project" value="UniProtKB-UniRule"/>
</dbReference>
<dbReference type="CDD" id="cd00610">
    <property type="entry name" value="OAT_like"/>
    <property type="match status" value="1"/>
</dbReference>
<dbReference type="FunFam" id="3.40.640.10:FF:000021">
    <property type="entry name" value="Glutamate-1-semialdehyde 2,1-aminomutase"/>
    <property type="match status" value="1"/>
</dbReference>
<dbReference type="Gene3D" id="3.90.1150.10">
    <property type="entry name" value="Aspartate Aminotransferase, domain 1"/>
    <property type="match status" value="1"/>
</dbReference>
<dbReference type="Gene3D" id="3.40.640.10">
    <property type="entry name" value="Type I PLP-dependent aspartate aminotransferase-like (Major domain)"/>
    <property type="match status" value="1"/>
</dbReference>
<dbReference type="HAMAP" id="MF_00375">
    <property type="entry name" value="HemL_aminotrans_3"/>
    <property type="match status" value="1"/>
</dbReference>
<dbReference type="InterPro" id="IPR004639">
    <property type="entry name" value="4pyrrol_synth_GluAld_NH2Trfase"/>
</dbReference>
<dbReference type="InterPro" id="IPR005814">
    <property type="entry name" value="Aminotrans_3"/>
</dbReference>
<dbReference type="InterPro" id="IPR049704">
    <property type="entry name" value="Aminotrans_3_PPA_site"/>
</dbReference>
<dbReference type="InterPro" id="IPR015424">
    <property type="entry name" value="PyrdxlP-dep_Trfase"/>
</dbReference>
<dbReference type="InterPro" id="IPR015421">
    <property type="entry name" value="PyrdxlP-dep_Trfase_major"/>
</dbReference>
<dbReference type="InterPro" id="IPR015422">
    <property type="entry name" value="PyrdxlP-dep_Trfase_small"/>
</dbReference>
<dbReference type="NCBIfam" id="TIGR00713">
    <property type="entry name" value="hemL"/>
    <property type="match status" value="1"/>
</dbReference>
<dbReference type="NCBIfam" id="NF000818">
    <property type="entry name" value="PRK00062.1"/>
    <property type="match status" value="1"/>
</dbReference>
<dbReference type="PANTHER" id="PTHR43713">
    <property type="entry name" value="GLUTAMATE-1-SEMIALDEHYDE 2,1-AMINOMUTASE"/>
    <property type="match status" value="1"/>
</dbReference>
<dbReference type="PANTHER" id="PTHR43713:SF3">
    <property type="entry name" value="GLUTAMATE-1-SEMIALDEHYDE 2,1-AMINOMUTASE 1, CHLOROPLASTIC-RELATED"/>
    <property type="match status" value="1"/>
</dbReference>
<dbReference type="Pfam" id="PF00202">
    <property type="entry name" value="Aminotran_3"/>
    <property type="match status" value="1"/>
</dbReference>
<dbReference type="SUPFAM" id="SSF53383">
    <property type="entry name" value="PLP-dependent transferases"/>
    <property type="match status" value="1"/>
</dbReference>
<dbReference type="PROSITE" id="PS00600">
    <property type="entry name" value="AA_TRANSFER_CLASS_3"/>
    <property type="match status" value="1"/>
</dbReference>
<sequence>MDLNIKLDKSGELFNESKKYLVGGVNSPVRSFKPFPFFVKSAKSCFLYDEDGNEFIDYCLAYGPMVLGHANEKILNAVKEQMDFGTAYGVPSEKEIILAKEVINRIPCAEMVRFVNSGTEATMGAIRLARGVTKRNKIIKFEGAFHGAHDYVLVKSGSGALTHGAPNSPGIPEDTTKNTLLIPFNDEGAVRKVISENKGEIACIILEPMMGNVGCILPKDGYLKFLREITEENGIILIFDEVITGFRLSKGGAQEYYGVKADIATLGKILGGGFPIGAIAGKKELMEQFSPKGQVYQAGTFNGNPISVTAGIETLKNLNNAFYKETAKKAEILSNYLIETTEKYKIPARVYSVASIFQVYFNDKDILTYDDAKSSDTEKFMKYFYSLLENGVFIPPSQFECCFTSIKHDDFVLEKTMNAIDIAMKKL</sequence>
<proteinExistence type="inferred from homology"/>
<protein>
    <recommendedName>
        <fullName evidence="1">Glutamate-1-semialdehyde 2,1-aminomutase</fullName>
        <shortName evidence="1">GSA</shortName>
        <ecNumber evidence="1">5.4.3.8</ecNumber>
    </recommendedName>
    <alternativeName>
        <fullName evidence="1">Glutamate-1-semialdehyde aminotransferase</fullName>
        <shortName evidence="1">GSA-AT</shortName>
    </alternativeName>
</protein>
<feature type="chain" id="PRO_0000382403" description="Glutamate-1-semialdehyde 2,1-aminomutase">
    <location>
        <begin position="1"/>
        <end position="427"/>
    </location>
</feature>
<feature type="modified residue" description="N6-(pyridoxal phosphate)lysine" evidence="1">
    <location>
        <position position="268"/>
    </location>
</feature>
<reference key="1">
    <citation type="submission" date="2007-06" db="EMBL/GenBank/DDBJ databases">
        <title>Complete sequence of Methanococcus vannielii SB.</title>
        <authorList>
            <consortium name="US DOE Joint Genome Institute"/>
            <person name="Copeland A."/>
            <person name="Lucas S."/>
            <person name="Lapidus A."/>
            <person name="Barry K."/>
            <person name="Glavina del Rio T."/>
            <person name="Dalin E."/>
            <person name="Tice H."/>
            <person name="Pitluck S."/>
            <person name="Chain P."/>
            <person name="Malfatti S."/>
            <person name="Shin M."/>
            <person name="Vergez L."/>
            <person name="Schmutz J."/>
            <person name="Larimer F."/>
            <person name="Land M."/>
            <person name="Hauser L."/>
            <person name="Kyrpides N."/>
            <person name="Anderson I."/>
            <person name="Sieprawska-Lupa M."/>
            <person name="Whitman W.B."/>
            <person name="Richardson P."/>
        </authorList>
    </citation>
    <scope>NUCLEOTIDE SEQUENCE [LARGE SCALE GENOMIC DNA]</scope>
    <source>
        <strain>ATCC 35089 / DSM 1224 / JCM 13029 / OCM 148 / SB</strain>
    </source>
</reference>
<organism>
    <name type="scientific">Methanococcus vannielii (strain ATCC 35089 / DSM 1224 / JCM 13029 / OCM 148 / SB)</name>
    <dbReference type="NCBI Taxonomy" id="406327"/>
    <lineage>
        <taxon>Archaea</taxon>
        <taxon>Methanobacteriati</taxon>
        <taxon>Methanobacteriota</taxon>
        <taxon>Methanomada group</taxon>
        <taxon>Methanococci</taxon>
        <taxon>Methanococcales</taxon>
        <taxon>Methanococcaceae</taxon>
        <taxon>Methanococcus</taxon>
    </lineage>
</organism>
<evidence type="ECO:0000255" key="1">
    <source>
        <dbReference type="HAMAP-Rule" id="MF_00375"/>
    </source>
</evidence>
<comment type="catalytic activity">
    <reaction evidence="1">
        <text>(S)-4-amino-5-oxopentanoate = 5-aminolevulinate</text>
        <dbReference type="Rhea" id="RHEA:14265"/>
        <dbReference type="ChEBI" id="CHEBI:57501"/>
        <dbReference type="ChEBI" id="CHEBI:356416"/>
        <dbReference type="EC" id="5.4.3.8"/>
    </reaction>
</comment>
<comment type="cofactor">
    <cofactor evidence="1">
        <name>pyridoxal 5'-phosphate</name>
        <dbReference type="ChEBI" id="CHEBI:597326"/>
    </cofactor>
</comment>
<comment type="pathway">
    <text evidence="1">Porphyrin-containing compound metabolism; protoporphyrin-IX biosynthesis; 5-aminolevulinate from L-glutamyl-tRNA(Glu): step 2/2.</text>
</comment>
<comment type="subcellular location">
    <subcellularLocation>
        <location evidence="1">Cytoplasm</location>
    </subcellularLocation>
</comment>
<comment type="similarity">
    <text evidence="1">Belongs to the class-III pyridoxal-phosphate-dependent aminotransferase family. HemL subfamily.</text>
</comment>
<gene>
    <name evidence="1" type="primary">hemL</name>
    <name type="ordered locus">Mevan_1237</name>
</gene>
<name>GSA_METVS</name>